<keyword id="KW-0963">Cytoplasm</keyword>
<keyword id="KW-0349">Heme</keyword>
<keyword id="KW-0408">Iron</keyword>
<keyword id="KW-0479">Metal-binding</keyword>
<keyword id="KW-0503">Monooxygenase</keyword>
<keyword id="KW-0560">Oxidoreductase</keyword>
<keyword id="KW-0614">Plasmid</keyword>
<geneLocation type="plasmid">
    <name>pFiD188</name>
</geneLocation>
<evidence type="ECO:0000250" key="1"/>
<evidence type="ECO:0000305" key="2"/>
<gene>
    <name type="primary">fas1</name>
    <name type="synonym">CYP105E1</name>
</gene>
<feature type="chain" id="PRO_0000052231" description="Cytochrome P450 FAS1">
    <location>
        <begin position="1"/>
        <end position="399"/>
    </location>
</feature>
<feature type="binding site" description="axial binding residue" evidence="1">
    <location>
        <position position="349"/>
    </location>
    <ligand>
        <name>heme</name>
        <dbReference type="ChEBI" id="CHEBI:30413"/>
    </ligand>
    <ligandPart>
        <name>Fe</name>
        <dbReference type="ChEBI" id="CHEBI:18248"/>
    </ligandPart>
</feature>
<dbReference type="EC" id="1.14.-.-"/>
<dbReference type="EMBL" id="Z29635">
    <property type="protein sequence ID" value="CAA82741.1"/>
    <property type="molecule type" value="Genomic_DNA"/>
</dbReference>
<dbReference type="PIR" id="A55578">
    <property type="entry name" value="A55578"/>
</dbReference>
<dbReference type="RefSeq" id="WP_015586131.1">
    <property type="nucleotide sequence ID" value="NZ_NPFU01000019.1"/>
</dbReference>
<dbReference type="RefSeq" id="YP_007878704.1">
    <property type="nucleotide sequence ID" value="NC_021080.1"/>
</dbReference>
<dbReference type="SMR" id="P46373"/>
<dbReference type="STRING" id="1443905.GCA_000761075_00040"/>
<dbReference type="eggNOG" id="COG2124">
    <property type="taxonomic scope" value="Bacteria"/>
</dbReference>
<dbReference type="GO" id="GO:0005737">
    <property type="term" value="C:cytoplasm"/>
    <property type="evidence" value="ECO:0007669"/>
    <property type="project" value="UniProtKB-SubCell"/>
</dbReference>
<dbReference type="GO" id="GO:0020037">
    <property type="term" value="F:heme binding"/>
    <property type="evidence" value="ECO:0007669"/>
    <property type="project" value="InterPro"/>
</dbReference>
<dbReference type="GO" id="GO:0005506">
    <property type="term" value="F:iron ion binding"/>
    <property type="evidence" value="ECO:0007669"/>
    <property type="project" value="InterPro"/>
</dbReference>
<dbReference type="GO" id="GO:0004497">
    <property type="term" value="F:monooxygenase activity"/>
    <property type="evidence" value="ECO:0007669"/>
    <property type="project" value="UniProtKB-KW"/>
</dbReference>
<dbReference type="GO" id="GO:0016705">
    <property type="term" value="F:oxidoreductase activity, acting on paired donors, with incorporation or reduction of molecular oxygen"/>
    <property type="evidence" value="ECO:0007669"/>
    <property type="project" value="InterPro"/>
</dbReference>
<dbReference type="CDD" id="cd11030">
    <property type="entry name" value="CYP105-like"/>
    <property type="match status" value="1"/>
</dbReference>
<dbReference type="FunFam" id="1.10.630.10:FF:000018">
    <property type="entry name" value="Cytochrome P450 monooxygenase"/>
    <property type="match status" value="1"/>
</dbReference>
<dbReference type="Gene3D" id="1.10.630.10">
    <property type="entry name" value="Cytochrome P450"/>
    <property type="match status" value="1"/>
</dbReference>
<dbReference type="InterPro" id="IPR001128">
    <property type="entry name" value="Cyt_P450"/>
</dbReference>
<dbReference type="InterPro" id="IPR002397">
    <property type="entry name" value="Cyt_P450_B"/>
</dbReference>
<dbReference type="InterPro" id="IPR017972">
    <property type="entry name" value="Cyt_P450_CS"/>
</dbReference>
<dbReference type="InterPro" id="IPR036396">
    <property type="entry name" value="Cyt_P450_sf"/>
</dbReference>
<dbReference type="PANTHER" id="PTHR46696:SF1">
    <property type="entry name" value="CYTOCHROME P450 YJIB-RELATED"/>
    <property type="match status" value="1"/>
</dbReference>
<dbReference type="PANTHER" id="PTHR46696">
    <property type="entry name" value="P450, PUTATIVE (EUROFUNG)-RELATED"/>
    <property type="match status" value="1"/>
</dbReference>
<dbReference type="Pfam" id="PF00067">
    <property type="entry name" value="p450"/>
    <property type="match status" value="1"/>
</dbReference>
<dbReference type="PRINTS" id="PR00359">
    <property type="entry name" value="BP450"/>
</dbReference>
<dbReference type="PRINTS" id="PR00385">
    <property type="entry name" value="P450"/>
</dbReference>
<dbReference type="SUPFAM" id="SSF48264">
    <property type="entry name" value="Cytochrome P450"/>
    <property type="match status" value="1"/>
</dbReference>
<dbReference type="PROSITE" id="PS00086">
    <property type="entry name" value="CYTOCHROME_P450"/>
    <property type="match status" value="1"/>
</dbReference>
<organism>
    <name type="scientific">Rhodococcoides fascians</name>
    <name type="common">Rhodococcus fascians</name>
    <dbReference type="NCBI Taxonomy" id="1828"/>
    <lineage>
        <taxon>Bacteria</taxon>
        <taxon>Bacillati</taxon>
        <taxon>Actinomycetota</taxon>
        <taxon>Actinomycetes</taxon>
        <taxon>Mycobacteriales</taxon>
        <taxon>Nocardiaceae</taxon>
        <taxon>Rhodococcoides</taxon>
    </lineage>
</organism>
<proteinExistence type="evidence at transcript level"/>
<sequence>MAGTADLPLEMRRNGLNPTEELAQVRDRDGVIPVGELYGAPAFLVCRYEDVRRIFADSNRFSNAHTPMFAIPSGGDVIEDELAAMRAGNLIGLDPPDHTRLRHILAAEFSVHRLSRLQPRIAEIVDSALDGLEQAGQPADLMDRYALPVSLLVLCELLGVPYADRDELRDRTARLLDLSASAEQRAVAQREDRRYMATLVTRAQEQPGDDLLGILARKIGDNLSTDELISIISLIMLGGHETTASMIGLSVLALLHHPEQAAMMIEDPNCVNSGIEELLRWLSVAHSQPPRMAVTEVQIAGVTIPAGSFVIPSLLAANRDSNLTDRPDDLDITRGVAGHLAFGHGVHFCLGHSLARMTLRTAVPAVLRRFPDLALSPSHDVRLRSASIVLGLEELQLTW</sequence>
<protein>
    <recommendedName>
        <fullName>Cytochrome P450 FAS1</fullName>
        <ecNumber>1.14.-.-</ecNumber>
    </recommendedName>
</protein>
<accession>P46373</accession>
<reference key="1">
    <citation type="journal article" date="1994" name="J. Bacteriol.">
        <title>The fas operon of Rhodococcus fascians encodes new genes required for efficient fasciation of host plants.</title>
        <authorList>
            <person name="Crespi M."/>
            <person name="Vereecke D."/>
            <person name="Temmerman W."/>
            <person name="van Montagu M."/>
            <person name="Desomer J."/>
        </authorList>
    </citation>
    <scope>NUCLEOTIDE SEQUENCE [GENOMIC DNA]</scope>
    <source>
        <strain>D188</strain>
    </source>
</reference>
<comment type="function">
    <text>May be involved in the biosynthesis of cytokinin phytohormones and in host plant fasciation (leafy gall).</text>
</comment>
<comment type="cofactor">
    <cofactor evidence="1">
        <name>heme</name>
        <dbReference type="ChEBI" id="CHEBI:30413"/>
    </cofactor>
</comment>
<comment type="subcellular location">
    <subcellularLocation>
        <location evidence="1">Cytoplasm</location>
    </subcellularLocation>
</comment>
<comment type="induction">
    <text>During the interaction with host plants.</text>
</comment>
<comment type="similarity">
    <text evidence="2">Belongs to the cytochrome P450 family.</text>
</comment>
<name>FAS1_RHOFA</name>